<sequence>MRIVFMGTPGFAEVILRALVGDKDIEVVGLFTQMDKPFGRKKELKAPETKTYILENHLNIPIFQPQSLKEPEVQILKDLKPNFIVVVAYGKILPKEVLTIAPCINLHASLLPKYRGASPIHEMILNDNKIYGISTMLMDVELDSGDILESASFLREDYLDLDALSLKLAHMGAALLLSTLKNFSSITRKSQDHMQASFCKKITKSDGLVGFKDAKSLFLKSLAFKSWPEIFLENGLKLLEVELVENEKSHKEGEILEIDEKGVLVGCLKGSVRIARLQAVGKKPLKAKDYLNGKRLKIGGILA</sequence>
<protein>
    <recommendedName>
        <fullName evidence="1">Methionyl-tRNA formyltransferase</fullName>
        <ecNumber evidence="1">2.1.2.9</ecNumber>
    </recommendedName>
</protein>
<dbReference type="EC" id="2.1.2.9" evidence="1"/>
<dbReference type="EMBL" id="AE000511">
    <property type="protein sequence ID" value="AAD08187.1"/>
    <property type="molecule type" value="Genomic_DNA"/>
</dbReference>
<dbReference type="PIR" id="E64662">
    <property type="entry name" value="E64662"/>
</dbReference>
<dbReference type="RefSeq" id="NP_207932.1">
    <property type="nucleotide sequence ID" value="NC_000915.1"/>
</dbReference>
<dbReference type="RefSeq" id="WP_001223483.1">
    <property type="nucleotide sequence ID" value="NC_018939.1"/>
</dbReference>
<dbReference type="SMR" id="P56461"/>
<dbReference type="FunCoup" id="P56461">
    <property type="interactions" value="344"/>
</dbReference>
<dbReference type="IntAct" id="P56461">
    <property type="interactions" value="1"/>
</dbReference>
<dbReference type="STRING" id="85962.HP_1141"/>
<dbReference type="PaxDb" id="85962-C694_05885"/>
<dbReference type="EnsemblBacteria" id="AAD08187">
    <property type="protein sequence ID" value="AAD08187"/>
    <property type="gene ID" value="HP_1141"/>
</dbReference>
<dbReference type="KEGG" id="heo:C694_05885"/>
<dbReference type="KEGG" id="hpy:HP_1141"/>
<dbReference type="PATRIC" id="fig|85962.47.peg.1223"/>
<dbReference type="eggNOG" id="COG0223">
    <property type="taxonomic scope" value="Bacteria"/>
</dbReference>
<dbReference type="InParanoid" id="P56461"/>
<dbReference type="OrthoDB" id="9802815at2"/>
<dbReference type="PhylomeDB" id="P56461"/>
<dbReference type="Proteomes" id="UP000000429">
    <property type="component" value="Chromosome"/>
</dbReference>
<dbReference type="GO" id="GO:0005829">
    <property type="term" value="C:cytosol"/>
    <property type="evidence" value="ECO:0000318"/>
    <property type="project" value="GO_Central"/>
</dbReference>
<dbReference type="GO" id="GO:0004479">
    <property type="term" value="F:methionyl-tRNA formyltransferase activity"/>
    <property type="evidence" value="ECO:0000318"/>
    <property type="project" value="GO_Central"/>
</dbReference>
<dbReference type="GO" id="GO:0071951">
    <property type="term" value="P:conversion of methionyl-tRNA to N-formyl-methionyl-tRNA"/>
    <property type="evidence" value="ECO:0000318"/>
    <property type="project" value="GO_Central"/>
</dbReference>
<dbReference type="CDD" id="cd08646">
    <property type="entry name" value="FMT_core_Met-tRNA-FMT_N"/>
    <property type="match status" value="1"/>
</dbReference>
<dbReference type="CDD" id="cd08704">
    <property type="entry name" value="Met_tRNA_FMT_C"/>
    <property type="match status" value="1"/>
</dbReference>
<dbReference type="FunFam" id="3.40.50.12230:FF:000001">
    <property type="entry name" value="Methionyl-tRNA formyltransferase"/>
    <property type="match status" value="1"/>
</dbReference>
<dbReference type="Gene3D" id="3.40.50.12230">
    <property type="match status" value="1"/>
</dbReference>
<dbReference type="HAMAP" id="MF_00182">
    <property type="entry name" value="Formyl_trans"/>
    <property type="match status" value="1"/>
</dbReference>
<dbReference type="InterPro" id="IPR005794">
    <property type="entry name" value="Fmt"/>
</dbReference>
<dbReference type="InterPro" id="IPR005793">
    <property type="entry name" value="Formyl_trans_C"/>
</dbReference>
<dbReference type="InterPro" id="IPR002376">
    <property type="entry name" value="Formyl_transf_N"/>
</dbReference>
<dbReference type="InterPro" id="IPR036477">
    <property type="entry name" value="Formyl_transf_N_sf"/>
</dbReference>
<dbReference type="InterPro" id="IPR011034">
    <property type="entry name" value="Formyl_transferase-like_C_sf"/>
</dbReference>
<dbReference type="InterPro" id="IPR044135">
    <property type="entry name" value="Met-tRNA-FMT_C"/>
</dbReference>
<dbReference type="InterPro" id="IPR041711">
    <property type="entry name" value="Met-tRNA-FMT_N"/>
</dbReference>
<dbReference type="NCBIfam" id="TIGR00460">
    <property type="entry name" value="fmt"/>
    <property type="match status" value="1"/>
</dbReference>
<dbReference type="PANTHER" id="PTHR11138">
    <property type="entry name" value="METHIONYL-TRNA FORMYLTRANSFERASE"/>
    <property type="match status" value="1"/>
</dbReference>
<dbReference type="PANTHER" id="PTHR11138:SF5">
    <property type="entry name" value="METHIONYL-TRNA FORMYLTRANSFERASE, MITOCHONDRIAL"/>
    <property type="match status" value="1"/>
</dbReference>
<dbReference type="Pfam" id="PF02911">
    <property type="entry name" value="Formyl_trans_C"/>
    <property type="match status" value="1"/>
</dbReference>
<dbReference type="Pfam" id="PF00551">
    <property type="entry name" value="Formyl_trans_N"/>
    <property type="match status" value="1"/>
</dbReference>
<dbReference type="SUPFAM" id="SSF50486">
    <property type="entry name" value="FMT C-terminal domain-like"/>
    <property type="match status" value="1"/>
</dbReference>
<dbReference type="SUPFAM" id="SSF53328">
    <property type="entry name" value="Formyltransferase"/>
    <property type="match status" value="1"/>
</dbReference>
<feature type="chain" id="PRO_0000082974" description="Methionyl-tRNA formyltransferase">
    <location>
        <begin position="1"/>
        <end position="303"/>
    </location>
</feature>
<feature type="binding site" evidence="1">
    <location>
        <begin position="109"/>
        <end position="112"/>
    </location>
    <ligand>
        <name>(6S)-5,6,7,8-tetrahydrofolate</name>
        <dbReference type="ChEBI" id="CHEBI:57453"/>
    </ligand>
</feature>
<keyword id="KW-0648">Protein biosynthesis</keyword>
<keyword id="KW-1185">Reference proteome</keyword>
<keyword id="KW-0808">Transferase</keyword>
<evidence type="ECO:0000255" key="1">
    <source>
        <dbReference type="HAMAP-Rule" id="MF_00182"/>
    </source>
</evidence>
<evidence type="ECO:0000305" key="2"/>
<comment type="function">
    <text evidence="1">Attaches a formyl group to the free amino group of methionyl-tRNA(fMet). The formyl group appears to play a dual role in the initiator identity of N-formylmethionyl-tRNA by promoting its recognition by IF2 and preventing the misappropriation of this tRNA by the elongation apparatus.</text>
</comment>
<comment type="catalytic activity">
    <reaction evidence="1">
        <text>L-methionyl-tRNA(fMet) + (6R)-10-formyltetrahydrofolate = N-formyl-L-methionyl-tRNA(fMet) + (6S)-5,6,7,8-tetrahydrofolate + H(+)</text>
        <dbReference type="Rhea" id="RHEA:24380"/>
        <dbReference type="Rhea" id="RHEA-COMP:9952"/>
        <dbReference type="Rhea" id="RHEA-COMP:9953"/>
        <dbReference type="ChEBI" id="CHEBI:15378"/>
        <dbReference type="ChEBI" id="CHEBI:57453"/>
        <dbReference type="ChEBI" id="CHEBI:78530"/>
        <dbReference type="ChEBI" id="CHEBI:78844"/>
        <dbReference type="ChEBI" id="CHEBI:195366"/>
        <dbReference type="EC" id="2.1.2.9"/>
    </reaction>
</comment>
<comment type="similarity">
    <text evidence="1 2">Belongs to the Fmt family.</text>
</comment>
<organism>
    <name type="scientific">Helicobacter pylori (strain ATCC 700392 / 26695)</name>
    <name type="common">Campylobacter pylori</name>
    <dbReference type="NCBI Taxonomy" id="85962"/>
    <lineage>
        <taxon>Bacteria</taxon>
        <taxon>Pseudomonadati</taxon>
        <taxon>Campylobacterota</taxon>
        <taxon>Epsilonproteobacteria</taxon>
        <taxon>Campylobacterales</taxon>
        <taxon>Helicobacteraceae</taxon>
        <taxon>Helicobacter</taxon>
    </lineage>
</organism>
<gene>
    <name evidence="1" type="primary">fmt</name>
    <name type="ordered locus">HP_1141</name>
</gene>
<accession>P56461</accession>
<proteinExistence type="inferred from homology"/>
<reference key="1">
    <citation type="journal article" date="1997" name="Nature">
        <title>The complete genome sequence of the gastric pathogen Helicobacter pylori.</title>
        <authorList>
            <person name="Tomb J.-F."/>
            <person name="White O."/>
            <person name="Kerlavage A.R."/>
            <person name="Clayton R.A."/>
            <person name="Sutton G.G."/>
            <person name="Fleischmann R.D."/>
            <person name="Ketchum K.A."/>
            <person name="Klenk H.-P."/>
            <person name="Gill S.R."/>
            <person name="Dougherty B.A."/>
            <person name="Nelson K.E."/>
            <person name="Quackenbush J."/>
            <person name="Zhou L."/>
            <person name="Kirkness E.F."/>
            <person name="Peterson S.N."/>
            <person name="Loftus B.J."/>
            <person name="Richardson D.L."/>
            <person name="Dodson R.J."/>
            <person name="Khalak H.G."/>
            <person name="Glodek A."/>
            <person name="McKenney K."/>
            <person name="FitzGerald L.M."/>
            <person name="Lee N."/>
            <person name="Adams M.D."/>
            <person name="Hickey E.K."/>
            <person name="Berg D.E."/>
            <person name="Gocayne J.D."/>
            <person name="Utterback T.R."/>
            <person name="Peterson J.D."/>
            <person name="Kelley J.M."/>
            <person name="Cotton M.D."/>
            <person name="Weidman J.F."/>
            <person name="Fujii C."/>
            <person name="Bowman C."/>
            <person name="Watthey L."/>
            <person name="Wallin E."/>
            <person name="Hayes W.S."/>
            <person name="Borodovsky M."/>
            <person name="Karp P.D."/>
            <person name="Smith H.O."/>
            <person name="Fraser C.M."/>
            <person name="Venter J.C."/>
        </authorList>
    </citation>
    <scope>NUCLEOTIDE SEQUENCE [LARGE SCALE GENOMIC DNA]</scope>
    <source>
        <strain>ATCC 700392 / 26695</strain>
    </source>
</reference>
<name>FMT_HELPY</name>